<keyword id="KW-0998">Cell outer membrane</keyword>
<keyword id="KW-0143">Chaperone</keyword>
<keyword id="KW-0449">Lipoprotein</keyword>
<keyword id="KW-0472">Membrane</keyword>
<keyword id="KW-0564">Palmitate</keyword>
<keyword id="KW-0653">Protein transport</keyword>
<keyword id="KW-0732">Signal</keyword>
<keyword id="KW-0813">Transport</keyword>
<reference key="1">
    <citation type="journal article" date="2005" name="Proc. Natl. Acad. Sci. U.S.A.">
        <title>Comparison of the complete genome sequences of Pseudomonas syringae pv. syringae B728a and pv. tomato DC3000.</title>
        <authorList>
            <person name="Feil H."/>
            <person name="Feil W.S."/>
            <person name="Chain P."/>
            <person name="Larimer F."/>
            <person name="Dibartolo G."/>
            <person name="Copeland A."/>
            <person name="Lykidis A."/>
            <person name="Trong S."/>
            <person name="Nolan M."/>
            <person name="Goltsman E."/>
            <person name="Thiel J."/>
            <person name="Malfatti S."/>
            <person name="Loper J.E."/>
            <person name="Lapidus A."/>
            <person name="Detter J.C."/>
            <person name="Land M."/>
            <person name="Richardson P.M."/>
            <person name="Kyrpides N.C."/>
            <person name="Ivanova N."/>
            <person name="Lindow S.E."/>
        </authorList>
    </citation>
    <scope>NUCLEOTIDE SEQUENCE [LARGE SCALE GENOMIC DNA]</scope>
    <source>
        <strain>B728a</strain>
    </source>
</reference>
<feature type="signal peptide" evidence="1">
    <location>
        <begin position="1"/>
        <end position="17"/>
    </location>
</feature>
<feature type="chain" id="PRO_1000021672" description="Outer-membrane lipoprotein LolB">
    <location>
        <begin position="18"/>
        <end position="205"/>
    </location>
</feature>
<feature type="lipid moiety-binding region" description="N-palmitoyl cysteine" evidence="1">
    <location>
        <position position="18"/>
    </location>
</feature>
<feature type="lipid moiety-binding region" description="S-diacylglycerol cysteine" evidence="1">
    <location>
        <position position="18"/>
    </location>
</feature>
<sequence>MFLRHVIVFSLIALLTGCAGLTSREAVQGKGDPAQWREHKQQLSSLDGWQINGKVGIRAPKDSGSGTLFWLQRQDYYDIRLSGPLGRGAARLTGRPGAVVLEVANQGRYEATSPESLLQDQLGWKLPVSHLVWWVRGLPAPDSKSNVTLDGDSRLASLEQDGWQVEYLSYVEQNGYWLPERVKLHGQDLDVTLVIKDWQPRKLGQ</sequence>
<name>LOLB_PSEU2</name>
<organism>
    <name type="scientific">Pseudomonas syringae pv. syringae (strain B728a)</name>
    <dbReference type="NCBI Taxonomy" id="205918"/>
    <lineage>
        <taxon>Bacteria</taxon>
        <taxon>Pseudomonadati</taxon>
        <taxon>Pseudomonadota</taxon>
        <taxon>Gammaproteobacteria</taxon>
        <taxon>Pseudomonadales</taxon>
        <taxon>Pseudomonadaceae</taxon>
        <taxon>Pseudomonas</taxon>
        <taxon>Pseudomonas syringae</taxon>
    </lineage>
</organism>
<accession>Q4ZXX0</accession>
<gene>
    <name evidence="1" type="primary">lolB</name>
    <name type="ordered locus">Psyr_0946</name>
</gene>
<evidence type="ECO:0000255" key="1">
    <source>
        <dbReference type="HAMAP-Rule" id="MF_00233"/>
    </source>
</evidence>
<comment type="function">
    <text evidence="1">Plays a critical role in the incorporation of lipoproteins in the outer membrane after they are released by the LolA protein.</text>
</comment>
<comment type="subunit">
    <text evidence="1">Monomer.</text>
</comment>
<comment type="subcellular location">
    <subcellularLocation>
        <location evidence="1">Cell outer membrane</location>
        <topology evidence="1">Lipid-anchor</topology>
    </subcellularLocation>
</comment>
<comment type="similarity">
    <text evidence="1">Belongs to the LolB family.</text>
</comment>
<protein>
    <recommendedName>
        <fullName evidence="1">Outer-membrane lipoprotein LolB</fullName>
    </recommendedName>
</protein>
<dbReference type="EMBL" id="CP000075">
    <property type="protein sequence ID" value="AAY36002.1"/>
    <property type="molecule type" value="Genomic_DNA"/>
</dbReference>
<dbReference type="RefSeq" id="WP_003365627.1">
    <property type="nucleotide sequence ID" value="NC_007005.1"/>
</dbReference>
<dbReference type="RefSeq" id="YP_234040.1">
    <property type="nucleotide sequence ID" value="NC_007005.1"/>
</dbReference>
<dbReference type="SMR" id="Q4ZXX0"/>
<dbReference type="STRING" id="205918.Psyr_0946"/>
<dbReference type="KEGG" id="psb:Psyr_0946"/>
<dbReference type="PATRIC" id="fig|205918.7.peg.975"/>
<dbReference type="eggNOG" id="COG3017">
    <property type="taxonomic scope" value="Bacteria"/>
</dbReference>
<dbReference type="HOGENOM" id="CLU_092816_2_1_6"/>
<dbReference type="OrthoDB" id="9797618at2"/>
<dbReference type="Proteomes" id="UP000000426">
    <property type="component" value="Chromosome"/>
</dbReference>
<dbReference type="GO" id="GO:0009279">
    <property type="term" value="C:cell outer membrane"/>
    <property type="evidence" value="ECO:0007669"/>
    <property type="project" value="UniProtKB-SubCell"/>
</dbReference>
<dbReference type="GO" id="GO:0044874">
    <property type="term" value="P:lipoprotein localization to outer membrane"/>
    <property type="evidence" value="ECO:0007669"/>
    <property type="project" value="UniProtKB-UniRule"/>
</dbReference>
<dbReference type="GO" id="GO:0015031">
    <property type="term" value="P:protein transport"/>
    <property type="evidence" value="ECO:0007669"/>
    <property type="project" value="UniProtKB-KW"/>
</dbReference>
<dbReference type="CDD" id="cd16326">
    <property type="entry name" value="LolB"/>
    <property type="match status" value="1"/>
</dbReference>
<dbReference type="Gene3D" id="2.50.20.10">
    <property type="entry name" value="Lipoprotein localisation LolA/LolB/LppX"/>
    <property type="match status" value="1"/>
</dbReference>
<dbReference type="HAMAP" id="MF_00233">
    <property type="entry name" value="LolB"/>
    <property type="match status" value="1"/>
</dbReference>
<dbReference type="InterPro" id="IPR029046">
    <property type="entry name" value="LolA/LolB/LppX"/>
</dbReference>
<dbReference type="InterPro" id="IPR004565">
    <property type="entry name" value="OM_lipoprot_LolB"/>
</dbReference>
<dbReference type="NCBIfam" id="TIGR00548">
    <property type="entry name" value="lolB"/>
    <property type="match status" value="1"/>
</dbReference>
<dbReference type="Pfam" id="PF03550">
    <property type="entry name" value="LolB"/>
    <property type="match status" value="1"/>
</dbReference>
<dbReference type="SUPFAM" id="SSF89392">
    <property type="entry name" value="Prokaryotic lipoproteins and lipoprotein localization factors"/>
    <property type="match status" value="1"/>
</dbReference>
<dbReference type="PROSITE" id="PS51257">
    <property type="entry name" value="PROKAR_LIPOPROTEIN"/>
    <property type="match status" value="1"/>
</dbReference>
<proteinExistence type="inferred from homology"/>